<accession>Q71ZB5</accession>
<name>GSA1_LISMF</name>
<organism>
    <name type="scientific">Listeria monocytogenes serotype 4b (strain F2365)</name>
    <dbReference type="NCBI Taxonomy" id="265669"/>
    <lineage>
        <taxon>Bacteria</taxon>
        <taxon>Bacillati</taxon>
        <taxon>Bacillota</taxon>
        <taxon>Bacilli</taxon>
        <taxon>Bacillales</taxon>
        <taxon>Listeriaceae</taxon>
        <taxon>Listeria</taxon>
    </lineage>
</organism>
<proteinExistence type="inferred from homology"/>
<keyword id="KW-0963">Cytoplasm</keyword>
<keyword id="KW-0413">Isomerase</keyword>
<keyword id="KW-0627">Porphyrin biosynthesis</keyword>
<keyword id="KW-0663">Pyridoxal phosphate</keyword>
<protein>
    <recommendedName>
        <fullName evidence="1">Glutamate-1-semialdehyde 2,1-aminomutase 1</fullName>
        <shortName evidence="1">GSA 1</shortName>
        <ecNumber evidence="1">5.4.3.8</ecNumber>
    </recommendedName>
    <alternativeName>
        <fullName evidence="1">Glutamate-1-semialdehyde aminotransferase 1</fullName>
        <shortName evidence="1">GSA-AT 1</shortName>
    </alternativeName>
</protein>
<reference key="1">
    <citation type="journal article" date="2004" name="Nucleic Acids Res.">
        <title>Whole genome comparisons of serotype 4b and 1/2a strains of the food-borne pathogen Listeria monocytogenes reveal new insights into the core genome components of this species.</title>
        <authorList>
            <person name="Nelson K.E."/>
            <person name="Fouts D.E."/>
            <person name="Mongodin E.F."/>
            <person name="Ravel J."/>
            <person name="DeBoy R.T."/>
            <person name="Kolonay J.F."/>
            <person name="Rasko D.A."/>
            <person name="Angiuoli S.V."/>
            <person name="Gill S.R."/>
            <person name="Paulsen I.T."/>
            <person name="Peterson J.D."/>
            <person name="White O."/>
            <person name="Nelson W.C."/>
            <person name="Nierman W.C."/>
            <person name="Beanan M.J."/>
            <person name="Brinkac L.M."/>
            <person name="Daugherty S.C."/>
            <person name="Dodson R.J."/>
            <person name="Durkin A.S."/>
            <person name="Madupu R."/>
            <person name="Haft D.H."/>
            <person name="Selengut J."/>
            <person name="Van Aken S.E."/>
            <person name="Khouri H.M."/>
            <person name="Fedorova N."/>
            <person name="Forberger H.A."/>
            <person name="Tran B."/>
            <person name="Kathariou S."/>
            <person name="Wonderling L.D."/>
            <person name="Uhlich G.A."/>
            <person name="Bayles D.O."/>
            <person name="Luchansky J.B."/>
            <person name="Fraser C.M."/>
        </authorList>
    </citation>
    <scope>NUCLEOTIDE SEQUENCE [LARGE SCALE GENOMIC DNA]</scope>
    <source>
        <strain>F2365</strain>
    </source>
</reference>
<dbReference type="EC" id="5.4.3.8" evidence="1"/>
<dbReference type="EMBL" id="AE017262">
    <property type="protein sequence ID" value="AAT04349.1"/>
    <property type="molecule type" value="Genomic_DNA"/>
</dbReference>
<dbReference type="SMR" id="Q71ZB5"/>
<dbReference type="KEGG" id="lmf:LMOf2365_1574"/>
<dbReference type="HOGENOM" id="CLU_016922_1_5_9"/>
<dbReference type="UniPathway" id="UPA00251">
    <property type="reaction ID" value="UER00317"/>
</dbReference>
<dbReference type="GO" id="GO:0005737">
    <property type="term" value="C:cytoplasm"/>
    <property type="evidence" value="ECO:0007669"/>
    <property type="project" value="UniProtKB-SubCell"/>
</dbReference>
<dbReference type="GO" id="GO:0042286">
    <property type="term" value="F:glutamate-1-semialdehyde 2,1-aminomutase activity"/>
    <property type="evidence" value="ECO:0007669"/>
    <property type="project" value="UniProtKB-UniRule"/>
</dbReference>
<dbReference type="GO" id="GO:0030170">
    <property type="term" value="F:pyridoxal phosphate binding"/>
    <property type="evidence" value="ECO:0007669"/>
    <property type="project" value="InterPro"/>
</dbReference>
<dbReference type="GO" id="GO:0008483">
    <property type="term" value="F:transaminase activity"/>
    <property type="evidence" value="ECO:0007669"/>
    <property type="project" value="InterPro"/>
</dbReference>
<dbReference type="GO" id="GO:0006782">
    <property type="term" value="P:protoporphyrinogen IX biosynthetic process"/>
    <property type="evidence" value="ECO:0007669"/>
    <property type="project" value="UniProtKB-UniRule"/>
</dbReference>
<dbReference type="CDD" id="cd00610">
    <property type="entry name" value="OAT_like"/>
    <property type="match status" value="1"/>
</dbReference>
<dbReference type="FunFam" id="3.40.640.10:FF:000021">
    <property type="entry name" value="Glutamate-1-semialdehyde 2,1-aminomutase"/>
    <property type="match status" value="1"/>
</dbReference>
<dbReference type="Gene3D" id="3.90.1150.10">
    <property type="entry name" value="Aspartate Aminotransferase, domain 1"/>
    <property type="match status" value="1"/>
</dbReference>
<dbReference type="Gene3D" id="3.40.640.10">
    <property type="entry name" value="Type I PLP-dependent aspartate aminotransferase-like (Major domain)"/>
    <property type="match status" value="1"/>
</dbReference>
<dbReference type="HAMAP" id="MF_00375">
    <property type="entry name" value="HemL_aminotrans_3"/>
    <property type="match status" value="1"/>
</dbReference>
<dbReference type="InterPro" id="IPR004639">
    <property type="entry name" value="4pyrrol_synth_GluAld_NH2Trfase"/>
</dbReference>
<dbReference type="InterPro" id="IPR005814">
    <property type="entry name" value="Aminotrans_3"/>
</dbReference>
<dbReference type="InterPro" id="IPR049704">
    <property type="entry name" value="Aminotrans_3_PPA_site"/>
</dbReference>
<dbReference type="InterPro" id="IPR015424">
    <property type="entry name" value="PyrdxlP-dep_Trfase"/>
</dbReference>
<dbReference type="InterPro" id="IPR015421">
    <property type="entry name" value="PyrdxlP-dep_Trfase_major"/>
</dbReference>
<dbReference type="InterPro" id="IPR015422">
    <property type="entry name" value="PyrdxlP-dep_Trfase_small"/>
</dbReference>
<dbReference type="NCBIfam" id="TIGR00713">
    <property type="entry name" value="hemL"/>
    <property type="match status" value="1"/>
</dbReference>
<dbReference type="NCBIfam" id="NF000818">
    <property type="entry name" value="PRK00062.1"/>
    <property type="match status" value="1"/>
</dbReference>
<dbReference type="PANTHER" id="PTHR43713">
    <property type="entry name" value="GLUTAMATE-1-SEMIALDEHYDE 2,1-AMINOMUTASE"/>
    <property type="match status" value="1"/>
</dbReference>
<dbReference type="PANTHER" id="PTHR43713:SF3">
    <property type="entry name" value="GLUTAMATE-1-SEMIALDEHYDE 2,1-AMINOMUTASE 1, CHLOROPLASTIC-RELATED"/>
    <property type="match status" value="1"/>
</dbReference>
<dbReference type="Pfam" id="PF00202">
    <property type="entry name" value="Aminotran_3"/>
    <property type="match status" value="1"/>
</dbReference>
<dbReference type="SUPFAM" id="SSF53383">
    <property type="entry name" value="PLP-dependent transferases"/>
    <property type="match status" value="1"/>
</dbReference>
<dbReference type="PROSITE" id="PS00600">
    <property type="entry name" value="AA_TRANSFER_CLASS_3"/>
    <property type="match status" value="1"/>
</dbReference>
<comment type="catalytic activity">
    <reaction evidence="1">
        <text>(S)-4-amino-5-oxopentanoate = 5-aminolevulinate</text>
        <dbReference type="Rhea" id="RHEA:14265"/>
        <dbReference type="ChEBI" id="CHEBI:57501"/>
        <dbReference type="ChEBI" id="CHEBI:356416"/>
        <dbReference type="EC" id="5.4.3.8"/>
    </reaction>
</comment>
<comment type="cofactor">
    <cofactor evidence="1">
        <name>pyridoxal 5'-phosphate</name>
        <dbReference type="ChEBI" id="CHEBI:597326"/>
    </cofactor>
</comment>
<comment type="pathway">
    <text evidence="1">Porphyrin-containing compound metabolism; protoporphyrin-IX biosynthesis; 5-aminolevulinate from L-glutamyl-tRNA(Glu): step 2/2.</text>
</comment>
<comment type="subunit">
    <text evidence="1">Homodimer.</text>
</comment>
<comment type="subcellular location">
    <subcellularLocation>
        <location evidence="1">Cytoplasm</location>
    </subcellularLocation>
</comment>
<comment type="similarity">
    <text evidence="1">Belongs to the class-III pyridoxal-phosphate-dependent aminotransferase family. HemL subfamily.</text>
</comment>
<evidence type="ECO:0000255" key="1">
    <source>
        <dbReference type="HAMAP-Rule" id="MF_00375"/>
    </source>
</evidence>
<feature type="chain" id="PRO_0000120418" description="Glutamate-1-semialdehyde 2,1-aminomutase 1">
    <location>
        <begin position="1"/>
        <end position="429"/>
    </location>
</feature>
<feature type="modified residue" description="N6-(pyridoxal phosphate)lysine" evidence="1">
    <location>
        <position position="268"/>
    </location>
</feature>
<gene>
    <name evidence="1" type="primary">hemL1</name>
    <name type="ordered locus">LMOf2365_1574</name>
</gene>
<sequence>MQNYSKSEKAFKEAKKVLPGGVNSPVRAFNSVDASPVFMDHGKGAYITDVDGNEYIDYVLSWGPLILGHADPAVVNAITKAALKGTSFGTPTEIETELAKLVIERVPSIEIVRMVSSGTEATMSAIRLARGYTKREKILKFEGSYHGHGDSLLIKAGSGVATLGLPDSPGVTKGLAADTITVPYNDIEGAELAFQKYGEEIAAVIVEPVAGNMGVVPPIDGFLEGLRELTTKFGSLLIFDEVMTGFRVDYYSAQGYYVVTPDLTCLGKVIGGGLPVGAYGGKKEIMEQIAPAGSIYQAGTLSGNPLAMNAGFETVRQLTPQHYDVFRTLIKRMEEGLTEISARRQVPLSINKAGSMFGFFFTDQKVINFDTAKTSNLEFFRNYYREMLGQGIFLPPSQFEGVFISTMHTEKEIDKTLEAFDTTCKILRG</sequence>